<protein>
    <recommendedName>
        <fullName evidence="1">Bifunctional protein GlmU</fullName>
    </recommendedName>
    <domain>
        <recommendedName>
            <fullName evidence="1">UDP-N-acetylglucosamine pyrophosphorylase</fullName>
            <ecNumber evidence="1">2.7.7.23</ecNumber>
        </recommendedName>
        <alternativeName>
            <fullName evidence="1">N-acetylglucosamine-1-phosphate uridyltransferase</fullName>
        </alternativeName>
    </domain>
    <domain>
        <recommendedName>
            <fullName evidence="1">Glucosamine-1-phosphate N-acetyltransferase</fullName>
            <ecNumber evidence="1">2.3.1.157</ecNumber>
        </recommendedName>
    </domain>
</protein>
<organism>
    <name type="scientific">Mycobacterium avium (strain 104)</name>
    <dbReference type="NCBI Taxonomy" id="243243"/>
    <lineage>
        <taxon>Bacteria</taxon>
        <taxon>Bacillati</taxon>
        <taxon>Actinomycetota</taxon>
        <taxon>Actinomycetes</taxon>
        <taxon>Mycobacteriales</taxon>
        <taxon>Mycobacteriaceae</taxon>
        <taxon>Mycobacterium</taxon>
        <taxon>Mycobacterium avium complex (MAC)</taxon>
    </lineage>
</organism>
<sequence length="490" mass="50614">MSSPGDTAVLVLAAGPGTRMRSDTPKVLHTLGGRSMLSHLLHAIAKVAPQHLAVVLGHDHERIAPLIADWADDLGRPIDVALQERPRGTGDAVRCGLSALPDDYAGVLVVTSGDTPLLDADTVADLIAGHTATRAAVTVLTTTLSDPSGYGRILRTQDNEVTAIVEHADATESQREIREVNAGVYAFDTAALRSALNRLSADNAQQELYLTDVIAILRGDGLPIRARHVDDSALVAGVNNRVQLAQLGAELNRRIVAAHQLAGVTVVDPATTWIDVDVTIGRDTVIHPGTQLLGRTQIGGHCVVGPDTTLTDVSVGDGASVVRTHGTGSSVGAGATVGPFAYLRPGTVLGDDGKLGAFVETKNATIGTGTKVPHLTYVGDADIGEHSNIGASSVFVNYDGESKRRTTVGSHVRTGSDTMFVAPVTVGDGAYTGAGTVVREDVPPGALAVSAGPQRNIEGWVRRKRPGSAAARAAEAAEKAAGGRPAGEAE</sequence>
<proteinExistence type="inferred from homology"/>
<name>GLMU_MYCA1</name>
<keyword id="KW-0012">Acyltransferase</keyword>
<keyword id="KW-0133">Cell shape</keyword>
<keyword id="KW-0961">Cell wall biogenesis/degradation</keyword>
<keyword id="KW-0963">Cytoplasm</keyword>
<keyword id="KW-0460">Magnesium</keyword>
<keyword id="KW-0479">Metal-binding</keyword>
<keyword id="KW-0511">Multifunctional enzyme</keyword>
<keyword id="KW-0548">Nucleotidyltransferase</keyword>
<keyword id="KW-0573">Peptidoglycan synthesis</keyword>
<keyword id="KW-0677">Repeat</keyword>
<keyword id="KW-0808">Transferase</keyword>
<comment type="function">
    <text evidence="1">Catalyzes the last two sequential reactions in the de novo biosynthetic pathway for UDP-N-acetylglucosamine (UDP-GlcNAc). The C-terminal domain catalyzes the transfer of acetyl group from acetyl coenzyme A to glucosamine-1-phosphate (GlcN-1-P) to produce N-acetylglucosamine-1-phosphate (GlcNAc-1-P), which is converted into UDP-GlcNAc by the transfer of uridine 5-monophosphate (from uridine 5-triphosphate), a reaction catalyzed by the N-terminal domain.</text>
</comment>
<comment type="catalytic activity">
    <reaction evidence="1">
        <text>alpha-D-glucosamine 1-phosphate + acetyl-CoA = N-acetyl-alpha-D-glucosamine 1-phosphate + CoA + H(+)</text>
        <dbReference type="Rhea" id="RHEA:13725"/>
        <dbReference type="ChEBI" id="CHEBI:15378"/>
        <dbReference type="ChEBI" id="CHEBI:57287"/>
        <dbReference type="ChEBI" id="CHEBI:57288"/>
        <dbReference type="ChEBI" id="CHEBI:57776"/>
        <dbReference type="ChEBI" id="CHEBI:58516"/>
        <dbReference type="EC" id="2.3.1.157"/>
    </reaction>
</comment>
<comment type="catalytic activity">
    <reaction evidence="1">
        <text>N-acetyl-alpha-D-glucosamine 1-phosphate + UTP + H(+) = UDP-N-acetyl-alpha-D-glucosamine + diphosphate</text>
        <dbReference type="Rhea" id="RHEA:13509"/>
        <dbReference type="ChEBI" id="CHEBI:15378"/>
        <dbReference type="ChEBI" id="CHEBI:33019"/>
        <dbReference type="ChEBI" id="CHEBI:46398"/>
        <dbReference type="ChEBI" id="CHEBI:57705"/>
        <dbReference type="ChEBI" id="CHEBI:57776"/>
        <dbReference type="EC" id="2.7.7.23"/>
    </reaction>
</comment>
<comment type="cofactor">
    <cofactor evidence="1">
        <name>Mg(2+)</name>
        <dbReference type="ChEBI" id="CHEBI:18420"/>
    </cofactor>
    <text evidence="1">Binds 1 Mg(2+) ion per subunit.</text>
</comment>
<comment type="pathway">
    <text evidence="1">Nucleotide-sugar biosynthesis; UDP-N-acetyl-alpha-D-glucosamine biosynthesis; N-acetyl-alpha-D-glucosamine 1-phosphate from alpha-D-glucosamine 6-phosphate (route II): step 2/2.</text>
</comment>
<comment type="pathway">
    <text evidence="1">Nucleotide-sugar biosynthesis; UDP-N-acetyl-alpha-D-glucosamine biosynthesis; UDP-N-acetyl-alpha-D-glucosamine from N-acetyl-alpha-D-glucosamine 1-phosphate: step 1/1.</text>
</comment>
<comment type="pathway">
    <text evidence="1">Bacterial outer membrane biogenesis; LPS lipid A biosynthesis.</text>
</comment>
<comment type="subunit">
    <text evidence="1">Homotrimer.</text>
</comment>
<comment type="subcellular location">
    <subcellularLocation>
        <location evidence="1">Cytoplasm</location>
    </subcellularLocation>
</comment>
<comment type="similarity">
    <text evidence="1">In the N-terminal section; belongs to the N-acetylglucosamine-1-phosphate uridyltransferase family.</text>
</comment>
<comment type="similarity">
    <text evidence="1">In the C-terminal section; belongs to the transferase hexapeptide repeat family.</text>
</comment>
<accession>A0QBW9</accession>
<reference key="1">
    <citation type="submission" date="2006-10" db="EMBL/GenBank/DDBJ databases">
        <authorList>
            <person name="Fleischmann R.D."/>
            <person name="Dodson R.J."/>
            <person name="Haft D.H."/>
            <person name="Merkel J.S."/>
            <person name="Nelson W.C."/>
            <person name="Fraser C.M."/>
        </authorList>
    </citation>
    <scope>NUCLEOTIDE SEQUENCE [LARGE SCALE GENOMIC DNA]</scope>
    <source>
        <strain>104</strain>
    </source>
</reference>
<dbReference type="EC" id="2.7.7.23" evidence="1"/>
<dbReference type="EC" id="2.3.1.157" evidence="1"/>
<dbReference type="EMBL" id="CP000479">
    <property type="protein sequence ID" value="ABK65231.1"/>
    <property type="molecule type" value="Genomic_DNA"/>
</dbReference>
<dbReference type="RefSeq" id="WP_011723975.1">
    <property type="nucleotide sequence ID" value="NC_008595.1"/>
</dbReference>
<dbReference type="SMR" id="A0QBW9"/>
<dbReference type="KEGG" id="mav:MAV_1157"/>
<dbReference type="HOGENOM" id="CLU_029499_15_2_11"/>
<dbReference type="UniPathway" id="UPA00113">
    <property type="reaction ID" value="UER00532"/>
</dbReference>
<dbReference type="UniPathway" id="UPA00113">
    <property type="reaction ID" value="UER00533"/>
</dbReference>
<dbReference type="UniPathway" id="UPA00973"/>
<dbReference type="Proteomes" id="UP000001574">
    <property type="component" value="Chromosome"/>
</dbReference>
<dbReference type="GO" id="GO:0005737">
    <property type="term" value="C:cytoplasm"/>
    <property type="evidence" value="ECO:0007669"/>
    <property type="project" value="UniProtKB-SubCell"/>
</dbReference>
<dbReference type="GO" id="GO:0016020">
    <property type="term" value="C:membrane"/>
    <property type="evidence" value="ECO:0007669"/>
    <property type="project" value="GOC"/>
</dbReference>
<dbReference type="GO" id="GO:0019134">
    <property type="term" value="F:glucosamine-1-phosphate N-acetyltransferase activity"/>
    <property type="evidence" value="ECO:0007669"/>
    <property type="project" value="UniProtKB-UniRule"/>
</dbReference>
<dbReference type="GO" id="GO:0000287">
    <property type="term" value="F:magnesium ion binding"/>
    <property type="evidence" value="ECO:0007669"/>
    <property type="project" value="UniProtKB-UniRule"/>
</dbReference>
<dbReference type="GO" id="GO:0003977">
    <property type="term" value="F:UDP-N-acetylglucosamine diphosphorylase activity"/>
    <property type="evidence" value="ECO:0007669"/>
    <property type="project" value="UniProtKB-UniRule"/>
</dbReference>
<dbReference type="GO" id="GO:0000902">
    <property type="term" value="P:cell morphogenesis"/>
    <property type="evidence" value="ECO:0007669"/>
    <property type="project" value="UniProtKB-UniRule"/>
</dbReference>
<dbReference type="GO" id="GO:0071555">
    <property type="term" value="P:cell wall organization"/>
    <property type="evidence" value="ECO:0007669"/>
    <property type="project" value="UniProtKB-KW"/>
</dbReference>
<dbReference type="GO" id="GO:0009245">
    <property type="term" value="P:lipid A biosynthetic process"/>
    <property type="evidence" value="ECO:0007669"/>
    <property type="project" value="UniProtKB-UniRule"/>
</dbReference>
<dbReference type="GO" id="GO:0009252">
    <property type="term" value="P:peptidoglycan biosynthetic process"/>
    <property type="evidence" value="ECO:0007669"/>
    <property type="project" value="UniProtKB-UniRule"/>
</dbReference>
<dbReference type="GO" id="GO:0008360">
    <property type="term" value="P:regulation of cell shape"/>
    <property type="evidence" value="ECO:0007669"/>
    <property type="project" value="UniProtKB-KW"/>
</dbReference>
<dbReference type="GO" id="GO:0006048">
    <property type="term" value="P:UDP-N-acetylglucosamine biosynthetic process"/>
    <property type="evidence" value="ECO:0007669"/>
    <property type="project" value="UniProtKB-UniPathway"/>
</dbReference>
<dbReference type="CDD" id="cd02540">
    <property type="entry name" value="GT2_GlmU_N_bac"/>
    <property type="match status" value="1"/>
</dbReference>
<dbReference type="CDD" id="cd03353">
    <property type="entry name" value="LbH_GlmU_C"/>
    <property type="match status" value="1"/>
</dbReference>
<dbReference type="FunFam" id="2.160.10.10:FF:000028">
    <property type="entry name" value="Bifunctional protein GlmU"/>
    <property type="match status" value="1"/>
</dbReference>
<dbReference type="Gene3D" id="2.160.10.10">
    <property type="entry name" value="Hexapeptide repeat proteins"/>
    <property type="match status" value="1"/>
</dbReference>
<dbReference type="Gene3D" id="3.90.550.10">
    <property type="entry name" value="Spore Coat Polysaccharide Biosynthesis Protein SpsA, Chain A"/>
    <property type="match status" value="1"/>
</dbReference>
<dbReference type="HAMAP" id="MF_01631">
    <property type="entry name" value="GlmU"/>
    <property type="match status" value="1"/>
</dbReference>
<dbReference type="InterPro" id="IPR005882">
    <property type="entry name" value="Bifunctional_GlmU"/>
</dbReference>
<dbReference type="InterPro" id="IPR050065">
    <property type="entry name" value="GlmU-like"/>
</dbReference>
<dbReference type="InterPro" id="IPR038009">
    <property type="entry name" value="GlmU_C_LbH"/>
</dbReference>
<dbReference type="InterPro" id="IPR001451">
    <property type="entry name" value="Hexapep"/>
</dbReference>
<dbReference type="InterPro" id="IPR025877">
    <property type="entry name" value="MobA-like_NTP_Trfase"/>
</dbReference>
<dbReference type="InterPro" id="IPR029044">
    <property type="entry name" value="Nucleotide-diphossugar_trans"/>
</dbReference>
<dbReference type="InterPro" id="IPR011004">
    <property type="entry name" value="Trimer_LpxA-like_sf"/>
</dbReference>
<dbReference type="NCBIfam" id="TIGR01173">
    <property type="entry name" value="glmU"/>
    <property type="match status" value="1"/>
</dbReference>
<dbReference type="NCBIfam" id="NF010932">
    <property type="entry name" value="PRK14352.1"/>
    <property type="match status" value="1"/>
</dbReference>
<dbReference type="PANTHER" id="PTHR43584:SF3">
    <property type="entry name" value="BIFUNCTIONAL PROTEIN GLMU"/>
    <property type="match status" value="1"/>
</dbReference>
<dbReference type="PANTHER" id="PTHR43584">
    <property type="entry name" value="NUCLEOTIDYL TRANSFERASE"/>
    <property type="match status" value="1"/>
</dbReference>
<dbReference type="Pfam" id="PF00132">
    <property type="entry name" value="Hexapep"/>
    <property type="match status" value="1"/>
</dbReference>
<dbReference type="Pfam" id="PF12804">
    <property type="entry name" value="NTP_transf_3"/>
    <property type="match status" value="1"/>
</dbReference>
<dbReference type="SUPFAM" id="SSF53448">
    <property type="entry name" value="Nucleotide-diphospho-sugar transferases"/>
    <property type="match status" value="1"/>
</dbReference>
<dbReference type="SUPFAM" id="SSF51161">
    <property type="entry name" value="Trimeric LpxA-like enzymes"/>
    <property type="match status" value="1"/>
</dbReference>
<evidence type="ECO:0000255" key="1">
    <source>
        <dbReference type="HAMAP-Rule" id="MF_01631"/>
    </source>
</evidence>
<evidence type="ECO:0000256" key="2">
    <source>
        <dbReference type="SAM" id="MobiDB-lite"/>
    </source>
</evidence>
<gene>
    <name evidence="1" type="primary">glmU</name>
    <name type="ordered locus">MAV_1157</name>
</gene>
<feature type="chain" id="PRO_0000337729" description="Bifunctional protein GlmU">
    <location>
        <begin position="1"/>
        <end position="490"/>
    </location>
</feature>
<feature type="region of interest" description="Pyrophosphorylase" evidence="1">
    <location>
        <begin position="1"/>
        <end position="241"/>
    </location>
</feature>
<feature type="region of interest" description="Linker" evidence="1">
    <location>
        <begin position="242"/>
        <end position="262"/>
    </location>
</feature>
<feature type="region of interest" description="N-acetyltransferase" evidence="1">
    <location>
        <begin position="263"/>
        <end position="490"/>
    </location>
</feature>
<feature type="region of interest" description="Disordered" evidence="2">
    <location>
        <begin position="462"/>
        <end position="490"/>
    </location>
</feature>
<feature type="compositionally biased region" description="Low complexity" evidence="2">
    <location>
        <begin position="467"/>
        <end position="490"/>
    </location>
</feature>
<feature type="active site" description="Proton acceptor" evidence="1">
    <location>
        <position position="374"/>
    </location>
</feature>
<feature type="binding site" evidence="1">
    <location>
        <begin position="12"/>
        <end position="15"/>
    </location>
    <ligand>
        <name>UDP-N-acetyl-alpha-D-glucosamine</name>
        <dbReference type="ChEBI" id="CHEBI:57705"/>
    </ligand>
</feature>
<feature type="binding site" evidence="1">
    <location>
        <position position="26"/>
    </location>
    <ligand>
        <name>UDP-N-acetyl-alpha-D-glucosamine</name>
        <dbReference type="ChEBI" id="CHEBI:57705"/>
    </ligand>
</feature>
<feature type="binding site" evidence="1">
    <location>
        <position position="83"/>
    </location>
    <ligand>
        <name>UDP-N-acetyl-alpha-D-glucosamine</name>
        <dbReference type="ChEBI" id="CHEBI:57705"/>
    </ligand>
</feature>
<feature type="binding site" evidence="1">
    <location>
        <begin position="88"/>
        <end position="89"/>
    </location>
    <ligand>
        <name>UDP-N-acetyl-alpha-D-glucosamine</name>
        <dbReference type="ChEBI" id="CHEBI:57705"/>
    </ligand>
</feature>
<feature type="binding site" evidence="1">
    <location>
        <begin position="112"/>
        <end position="114"/>
    </location>
    <ligand>
        <name>UDP-N-acetyl-alpha-D-glucosamine</name>
        <dbReference type="ChEBI" id="CHEBI:57705"/>
    </ligand>
</feature>
<feature type="binding site" evidence="1">
    <location>
        <position position="114"/>
    </location>
    <ligand>
        <name>Mg(2+)</name>
        <dbReference type="ChEBI" id="CHEBI:18420"/>
    </ligand>
</feature>
<feature type="binding site" evidence="1">
    <location>
        <position position="151"/>
    </location>
    <ligand>
        <name>UDP-N-acetyl-alpha-D-glucosamine</name>
        <dbReference type="ChEBI" id="CHEBI:57705"/>
    </ligand>
</feature>
<feature type="binding site" evidence="1">
    <location>
        <position position="166"/>
    </location>
    <ligand>
        <name>UDP-N-acetyl-alpha-D-glucosamine</name>
        <dbReference type="ChEBI" id="CHEBI:57705"/>
    </ligand>
</feature>
<feature type="binding site" evidence="1">
    <location>
        <position position="181"/>
    </location>
    <ligand>
        <name>UDP-N-acetyl-alpha-D-glucosamine</name>
        <dbReference type="ChEBI" id="CHEBI:57705"/>
    </ligand>
</feature>
<feature type="binding site" evidence="1">
    <location>
        <position position="239"/>
    </location>
    <ligand>
        <name>Mg(2+)</name>
        <dbReference type="ChEBI" id="CHEBI:18420"/>
    </ligand>
</feature>
<feature type="binding site" evidence="1">
    <location>
        <position position="239"/>
    </location>
    <ligand>
        <name>UDP-N-acetyl-alpha-D-glucosamine</name>
        <dbReference type="ChEBI" id="CHEBI:57705"/>
    </ligand>
</feature>
<feature type="binding site" evidence="1">
    <location>
        <position position="344"/>
    </location>
    <ligand>
        <name>UDP-N-acetyl-alpha-D-glucosamine</name>
        <dbReference type="ChEBI" id="CHEBI:57705"/>
    </ligand>
</feature>
<feature type="binding site" evidence="1">
    <location>
        <position position="362"/>
    </location>
    <ligand>
        <name>UDP-N-acetyl-alpha-D-glucosamine</name>
        <dbReference type="ChEBI" id="CHEBI:57705"/>
    </ligand>
</feature>
<feature type="binding site" evidence="1">
    <location>
        <position position="377"/>
    </location>
    <ligand>
        <name>UDP-N-acetyl-alpha-D-glucosamine</name>
        <dbReference type="ChEBI" id="CHEBI:57705"/>
    </ligand>
</feature>
<feature type="binding site" evidence="1">
    <location>
        <position position="388"/>
    </location>
    <ligand>
        <name>UDP-N-acetyl-alpha-D-glucosamine</name>
        <dbReference type="ChEBI" id="CHEBI:57705"/>
    </ligand>
</feature>
<feature type="binding site" evidence="1">
    <location>
        <position position="391"/>
    </location>
    <ligand>
        <name>acetyl-CoA</name>
        <dbReference type="ChEBI" id="CHEBI:57288"/>
    </ligand>
</feature>
<feature type="binding site" evidence="1">
    <location>
        <begin position="397"/>
        <end position="398"/>
    </location>
    <ligand>
        <name>acetyl-CoA</name>
        <dbReference type="ChEBI" id="CHEBI:57288"/>
    </ligand>
</feature>
<feature type="binding site" evidence="1">
    <location>
        <position position="416"/>
    </location>
    <ligand>
        <name>acetyl-CoA</name>
        <dbReference type="ChEBI" id="CHEBI:57288"/>
    </ligand>
</feature>
<feature type="binding site" evidence="1">
    <location>
        <position position="434"/>
    </location>
    <ligand>
        <name>acetyl-CoA</name>
        <dbReference type="ChEBI" id="CHEBI:57288"/>
    </ligand>
</feature>